<evidence type="ECO:0000250" key="1"/>
<evidence type="ECO:0000255" key="2"/>
<evidence type="ECO:0000305" key="3"/>
<comment type="function">
    <text evidence="1">Involved in O antigen modification. Catalyzes the transfer of the glucose residue from UDP-glucose to a lipid carrier (By similarity).</text>
</comment>
<comment type="subcellular location">
    <subcellularLocation>
        <location evidence="3">Membrane</location>
        <topology evidence="3">Multi-pass membrane protein</topology>
    </subcellularLocation>
</comment>
<comment type="similarity">
    <text evidence="3">Belongs to the glycosyltransferase 2 family. GtrB subfamily.</text>
</comment>
<organism>
    <name type="scientific">Shigella phage SfII</name>
    <name type="common">Shigella flexneri bacteriophage II</name>
    <name type="synonym">Bacteriophage SfII</name>
    <dbReference type="NCBI Taxonomy" id="66284"/>
    <lineage>
        <taxon>Viruses</taxon>
        <taxon>Duplodnaviria</taxon>
        <taxon>Heunggongvirae</taxon>
        <taxon>Uroviricota</taxon>
        <taxon>Caudoviricetes</taxon>
    </lineage>
</organism>
<gene>
    <name type="primary">gtrB</name>
    <name type="synonym">bgt</name>
</gene>
<proteinExistence type="inferred from homology"/>
<sequence>MKISLVVPVFNEEEAIPVFYKTVREFQELKPYEVEIVFINDGSKDATESIINALAVSDPLVVPLSFTRNFGKEPALFAGLDHASGDAVIPIDVDLQDPIEVIPHLIEKWQAGADMVLAKRSDRSTDGRLKRKTAEWFYKLHNKISTPKIEENVGDFRLMSREVVENIKLLPERNLFMKGILSWVGGQTDVVEYVRAERVAGISKFNGWKLWNLALEGITSFSTFPLRVWTYIGLFVASISFLYGAWMIIDTLVFGNPVRGYPSLLVSILFLGGVQLIGIGVLGEYIGRIYIEVKNRPKYIIKKSHRGNP</sequence>
<reference key="1">
    <citation type="journal article" date="1997" name="Mol. Microbiol.">
        <title>Mechanism of bacteriophage SfII-mediated serotype conversion in Shigella flexneri.</title>
        <authorList>
            <person name="Mavris M."/>
            <person name="Manning P.A."/>
            <person name="Morona R."/>
        </authorList>
    </citation>
    <scope>NUCLEOTIDE SEQUENCE [GENOMIC DNA]</scope>
</reference>
<feature type="chain" id="PRO_0000059190" description="Bactoprenol glucosyl transferase">
    <location>
        <begin position="1"/>
        <end position="309"/>
    </location>
</feature>
<feature type="transmembrane region" description="Helical" evidence="2">
    <location>
        <begin position="229"/>
        <end position="249"/>
    </location>
</feature>
<feature type="transmembrane region" description="Helical" evidence="2">
    <location>
        <begin position="263"/>
        <end position="283"/>
    </location>
</feature>
<accession>P68668</accession>
<accession>O21943</accession>
<keyword id="KW-0328">Glycosyltransferase</keyword>
<keyword id="KW-0472">Membrane</keyword>
<keyword id="KW-0808">Transferase</keyword>
<keyword id="KW-0812">Transmembrane</keyword>
<keyword id="KW-1133">Transmembrane helix</keyword>
<organismHost>
    <name type="scientific">Shigella flexneri</name>
    <dbReference type="NCBI Taxonomy" id="623"/>
</organismHost>
<dbReference type="EC" id="2.4.1.-"/>
<dbReference type="EMBL" id="AF021347">
    <property type="protein sequence ID" value="AAC39272.1"/>
    <property type="molecule type" value="Genomic_DNA"/>
</dbReference>
<dbReference type="RefSeq" id="YP_008318506.1">
    <property type="nucleotide sequence ID" value="NC_021857.1"/>
</dbReference>
<dbReference type="SMR" id="P68668"/>
<dbReference type="CAZy" id="GT2">
    <property type="family name" value="Glycosyltransferase Family 2"/>
</dbReference>
<dbReference type="GeneID" id="16384913"/>
<dbReference type="KEGG" id="vg:16384913"/>
<dbReference type="OrthoDB" id="4790at10239"/>
<dbReference type="GO" id="GO:0005886">
    <property type="term" value="C:plasma membrane"/>
    <property type="evidence" value="ECO:0007669"/>
    <property type="project" value="TreeGrafter"/>
</dbReference>
<dbReference type="GO" id="GO:0016757">
    <property type="term" value="F:glycosyltransferase activity"/>
    <property type="evidence" value="ECO:0007669"/>
    <property type="project" value="UniProtKB-KW"/>
</dbReference>
<dbReference type="CDD" id="cd04187">
    <property type="entry name" value="DPM1_like_bac"/>
    <property type="match status" value="1"/>
</dbReference>
<dbReference type="FunFam" id="3.90.550.10:FF:000099">
    <property type="entry name" value="Bactoprenol glucosyl transferase"/>
    <property type="match status" value="1"/>
</dbReference>
<dbReference type="Gene3D" id="3.90.550.10">
    <property type="entry name" value="Spore Coat Polysaccharide Biosynthesis Protein SpsA, Chain A"/>
    <property type="match status" value="1"/>
</dbReference>
<dbReference type="InterPro" id="IPR001173">
    <property type="entry name" value="Glyco_trans_2-like"/>
</dbReference>
<dbReference type="InterPro" id="IPR050256">
    <property type="entry name" value="Glycosyltransferase_2"/>
</dbReference>
<dbReference type="InterPro" id="IPR029044">
    <property type="entry name" value="Nucleotide-diphossugar_trans"/>
</dbReference>
<dbReference type="PANTHER" id="PTHR48090:SF1">
    <property type="entry name" value="PROPHAGE BACTOPRENOL GLUCOSYL TRANSFERASE HOMOLOG"/>
    <property type="match status" value="1"/>
</dbReference>
<dbReference type="PANTHER" id="PTHR48090">
    <property type="entry name" value="UNDECAPRENYL-PHOSPHATE 4-DEOXY-4-FORMAMIDO-L-ARABINOSE TRANSFERASE-RELATED"/>
    <property type="match status" value="1"/>
</dbReference>
<dbReference type="Pfam" id="PF00535">
    <property type="entry name" value="Glycos_transf_2"/>
    <property type="match status" value="1"/>
</dbReference>
<dbReference type="SUPFAM" id="SSF53448">
    <property type="entry name" value="Nucleotide-diphospho-sugar transferases"/>
    <property type="match status" value="1"/>
</dbReference>
<name>GTRB_BPSF2</name>
<protein>
    <recommendedName>
        <fullName>Bactoprenol glucosyl transferase</fullName>
        <ecNumber>2.4.1.-</ecNumber>
    </recommendedName>
</protein>